<feature type="chain" id="PRO_1000114321" description="Protein RecA">
    <location>
        <begin position="1"/>
        <end position="347"/>
    </location>
</feature>
<feature type="binding site" evidence="1">
    <location>
        <begin position="80"/>
        <end position="87"/>
    </location>
    <ligand>
        <name>ATP</name>
        <dbReference type="ChEBI" id="CHEBI:30616"/>
    </ligand>
</feature>
<evidence type="ECO:0000255" key="1">
    <source>
        <dbReference type="HAMAP-Rule" id="MF_00268"/>
    </source>
</evidence>
<protein>
    <recommendedName>
        <fullName evidence="1">Protein RecA</fullName>
    </recommendedName>
    <alternativeName>
        <fullName evidence="1">Recombinase A</fullName>
    </alternativeName>
</protein>
<name>RECA_CHLP8</name>
<reference key="1">
    <citation type="submission" date="2008-06" db="EMBL/GenBank/DDBJ databases">
        <title>Complete sequence of Chlorobaculum parvum NCIB 8327.</title>
        <authorList>
            <consortium name="US DOE Joint Genome Institute"/>
            <person name="Lucas S."/>
            <person name="Copeland A."/>
            <person name="Lapidus A."/>
            <person name="Glavina del Rio T."/>
            <person name="Dalin E."/>
            <person name="Tice H."/>
            <person name="Bruce D."/>
            <person name="Goodwin L."/>
            <person name="Pitluck S."/>
            <person name="Schmutz J."/>
            <person name="Larimer F."/>
            <person name="Land M."/>
            <person name="Hauser L."/>
            <person name="Kyrpides N."/>
            <person name="Mikhailova N."/>
            <person name="Zhao F."/>
            <person name="Li T."/>
            <person name="Liu Z."/>
            <person name="Overmann J."/>
            <person name="Bryant D.A."/>
            <person name="Richardson P."/>
        </authorList>
    </citation>
    <scope>NUCLEOTIDE SEQUENCE [LARGE SCALE GENOMIC DNA]</scope>
    <source>
        <strain>DSM 263 / NCIMB 8327</strain>
    </source>
</reference>
<sequence length="347" mass="37285">MDKENSKQTAQPPVVDPARLKQLNLAIETLEKQFGKGSIMRLGDDSAVMHVKAISTGSMALDYALGVGGFPRGRVTEIYGPESSGKTTLALHAIAEAQKEGGIAALVDAEHAFDPTYARKLGVDINSLLVSQPESGEQALSIVETLVRSGAVDIVVVDSVAALVPQAELEGEMGDSVVGLQARLMSQALRKLTGAISKSSSVCIFINQLRDKIGVMYGSPETTTGGKALKFYSSVRLDIRRIAQIKDGEEVVGNRTKVKVVKNKVAPPFKIAEFDILYGEGISVLGELIDLAVEFGIIKKAGAWFSYGSEKLGQGRENVKRLLKEDETVRNTIRQQVRDTLTGTPTE</sequence>
<dbReference type="EMBL" id="CP001099">
    <property type="protein sequence ID" value="ACF10708.1"/>
    <property type="molecule type" value="Genomic_DNA"/>
</dbReference>
<dbReference type="RefSeq" id="WP_012501541.1">
    <property type="nucleotide sequence ID" value="NC_011027.1"/>
</dbReference>
<dbReference type="SMR" id="B3QQT8"/>
<dbReference type="STRING" id="517417.Cpar_0281"/>
<dbReference type="KEGG" id="cpc:Cpar_0281"/>
<dbReference type="eggNOG" id="COG0468">
    <property type="taxonomic scope" value="Bacteria"/>
</dbReference>
<dbReference type="HOGENOM" id="CLU_040469_3_2_10"/>
<dbReference type="OrthoDB" id="9776733at2"/>
<dbReference type="Proteomes" id="UP000008811">
    <property type="component" value="Chromosome"/>
</dbReference>
<dbReference type="GO" id="GO:0005829">
    <property type="term" value="C:cytosol"/>
    <property type="evidence" value="ECO:0007669"/>
    <property type="project" value="TreeGrafter"/>
</dbReference>
<dbReference type="GO" id="GO:0005524">
    <property type="term" value="F:ATP binding"/>
    <property type="evidence" value="ECO:0007669"/>
    <property type="project" value="UniProtKB-UniRule"/>
</dbReference>
<dbReference type="GO" id="GO:0016887">
    <property type="term" value="F:ATP hydrolysis activity"/>
    <property type="evidence" value="ECO:0007669"/>
    <property type="project" value="InterPro"/>
</dbReference>
<dbReference type="GO" id="GO:0140664">
    <property type="term" value="F:ATP-dependent DNA damage sensor activity"/>
    <property type="evidence" value="ECO:0007669"/>
    <property type="project" value="InterPro"/>
</dbReference>
<dbReference type="GO" id="GO:0003684">
    <property type="term" value="F:damaged DNA binding"/>
    <property type="evidence" value="ECO:0007669"/>
    <property type="project" value="UniProtKB-UniRule"/>
</dbReference>
<dbReference type="GO" id="GO:0003697">
    <property type="term" value="F:single-stranded DNA binding"/>
    <property type="evidence" value="ECO:0007669"/>
    <property type="project" value="UniProtKB-UniRule"/>
</dbReference>
<dbReference type="GO" id="GO:0006310">
    <property type="term" value="P:DNA recombination"/>
    <property type="evidence" value="ECO:0007669"/>
    <property type="project" value="UniProtKB-UniRule"/>
</dbReference>
<dbReference type="GO" id="GO:0006281">
    <property type="term" value="P:DNA repair"/>
    <property type="evidence" value="ECO:0007669"/>
    <property type="project" value="UniProtKB-UniRule"/>
</dbReference>
<dbReference type="GO" id="GO:0009432">
    <property type="term" value="P:SOS response"/>
    <property type="evidence" value="ECO:0007669"/>
    <property type="project" value="UniProtKB-UniRule"/>
</dbReference>
<dbReference type="CDD" id="cd00983">
    <property type="entry name" value="RecA"/>
    <property type="match status" value="1"/>
</dbReference>
<dbReference type="FunFam" id="3.40.50.300:FF:000087">
    <property type="entry name" value="Recombinase RecA"/>
    <property type="match status" value="1"/>
</dbReference>
<dbReference type="Gene3D" id="3.40.50.300">
    <property type="entry name" value="P-loop containing nucleotide triphosphate hydrolases"/>
    <property type="match status" value="1"/>
</dbReference>
<dbReference type="HAMAP" id="MF_00268">
    <property type="entry name" value="RecA"/>
    <property type="match status" value="1"/>
</dbReference>
<dbReference type="InterPro" id="IPR003593">
    <property type="entry name" value="AAA+_ATPase"/>
</dbReference>
<dbReference type="InterPro" id="IPR013765">
    <property type="entry name" value="DNA_recomb/repair_RecA"/>
</dbReference>
<dbReference type="InterPro" id="IPR020584">
    <property type="entry name" value="DNA_recomb/repair_RecA_CS"/>
</dbReference>
<dbReference type="InterPro" id="IPR027417">
    <property type="entry name" value="P-loop_NTPase"/>
</dbReference>
<dbReference type="InterPro" id="IPR049261">
    <property type="entry name" value="RecA-like_C"/>
</dbReference>
<dbReference type="InterPro" id="IPR049428">
    <property type="entry name" value="RecA-like_N"/>
</dbReference>
<dbReference type="InterPro" id="IPR020588">
    <property type="entry name" value="RecA_ATP-bd"/>
</dbReference>
<dbReference type="InterPro" id="IPR023400">
    <property type="entry name" value="RecA_C_sf"/>
</dbReference>
<dbReference type="InterPro" id="IPR020587">
    <property type="entry name" value="RecA_monomer-monomer_interface"/>
</dbReference>
<dbReference type="NCBIfam" id="TIGR02012">
    <property type="entry name" value="tigrfam_recA"/>
    <property type="match status" value="1"/>
</dbReference>
<dbReference type="PANTHER" id="PTHR45900:SF1">
    <property type="entry name" value="MITOCHONDRIAL DNA REPAIR PROTEIN RECA HOMOLOG-RELATED"/>
    <property type="match status" value="1"/>
</dbReference>
<dbReference type="PANTHER" id="PTHR45900">
    <property type="entry name" value="RECA"/>
    <property type="match status" value="1"/>
</dbReference>
<dbReference type="Pfam" id="PF00154">
    <property type="entry name" value="RecA"/>
    <property type="match status" value="1"/>
</dbReference>
<dbReference type="Pfam" id="PF21096">
    <property type="entry name" value="RecA_C"/>
    <property type="match status" value="1"/>
</dbReference>
<dbReference type="PRINTS" id="PR00142">
    <property type="entry name" value="RECA"/>
</dbReference>
<dbReference type="SMART" id="SM00382">
    <property type="entry name" value="AAA"/>
    <property type="match status" value="1"/>
</dbReference>
<dbReference type="SUPFAM" id="SSF52540">
    <property type="entry name" value="P-loop containing nucleoside triphosphate hydrolases"/>
    <property type="match status" value="1"/>
</dbReference>
<dbReference type="SUPFAM" id="SSF54752">
    <property type="entry name" value="RecA protein, C-terminal domain"/>
    <property type="match status" value="1"/>
</dbReference>
<dbReference type="PROSITE" id="PS00321">
    <property type="entry name" value="RECA_1"/>
    <property type="match status" value="1"/>
</dbReference>
<dbReference type="PROSITE" id="PS50162">
    <property type="entry name" value="RECA_2"/>
    <property type="match status" value="1"/>
</dbReference>
<dbReference type="PROSITE" id="PS50163">
    <property type="entry name" value="RECA_3"/>
    <property type="match status" value="1"/>
</dbReference>
<keyword id="KW-0067">ATP-binding</keyword>
<keyword id="KW-0963">Cytoplasm</keyword>
<keyword id="KW-0227">DNA damage</keyword>
<keyword id="KW-0233">DNA recombination</keyword>
<keyword id="KW-0234">DNA repair</keyword>
<keyword id="KW-0238">DNA-binding</keyword>
<keyword id="KW-0547">Nucleotide-binding</keyword>
<keyword id="KW-0742">SOS response</keyword>
<proteinExistence type="inferred from homology"/>
<comment type="function">
    <text evidence="1">Can catalyze the hydrolysis of ATP in the presence of single-stranded DNA, the ATP-dependent uptake of single-stranded DNA by duplex DNA, and the ATP-dependent hybridization of homologous single-stranded DNAs. It interacts with LexA causing its activation and leading to its autocatalytic cleavage.</text>
</comment>
<comment type="subcellular location">
    <subcellularLocation>
        <location evidence="1">Cytoplasm</location>
    </subcellularLocation>
</comment>
<comment type="similarity">
    <text evidence="1">Belongs to the RecA family.</text>
</comment>
<gene>
    <name evidence="1" type="primary">recA</name>
    <name type="ordered locus">Cpar_0281</name>
</gene>
<accession>B3QQT8</accession>
<organism>
    <name type="scientific">Chlorobaculum parvum (strain DSM 263 / NCIMB 8327)</name>
    <name type="common">Chlorobium vibrioforme subsp. thiosulfatophilum</name>
    <dbReference type="NCBI Taxonomy" id="517417"/>
    <lineage>
        <taxon>Bacteria</taxon>
        <taxon>Pseudomonadati</taxon>
        <taxon>Chlorobiota</taxon>
        <taxon>Chlorobiia</taxon>
        <taxon>Chlorobiales</taxon>
        <taxon>Chlorobiaceae</taxon>
        <taxon>Chlorobaculum</taxon>
    </lineage>
</organism>